<protein>
    <recommendedName>
        <fullName>Muscarinic acetylcholine receptor M3</fullName>
    </recommendedName>
</protein>
<reference key="1">
    <citation type="journal article" date="1987" name="Science">
        <title>Identification of a family of muscarinic acetylcholine receptor genes.</title>
        <authorList>
            <person name="Bonner T.I."/>
            <person name="Buckley N.J."/>
            <person name="Young A.C."/>
            <person name="Brann M.R."/>
        </authorList>
    </citation>
    <scope>NUCLEOTIDE SEQUENCE [GENOMIC DNA / MRNA]</scope>
</reference>
<reference key="2">
    <citation type="journal article" date="1988" name="Neuron">
        <title>Cloning and expression of the human and rat m5 muscarinic acetylcholine receptor genes.</title>
        <authorList>
            <person name="Bonner T.I."/>
            <person name="Young A.C."/>
            <person name="Brann M.R."/>
            <person name="Buckley N.J."/>
        </authorList>
    </citation>
    <scope>SEQUENCE REVISION TO 184</scope>
</reference>
<reference key="3">
    <citation type="journal article" date="1987" name="Biochem. Biophys. Res. Commun.">
        <title>A novel subtype of muscarinic receptor identified by homology screening.</title>
        <authorList>
            <person name="Braun T."/>
            <person name="Schofield P.R."/>
            <person name="Shivers B.D."/>
            <person name="Pritchett D.B."/>
            <person name="Seeburg P.H."/>
        </authorList>
    </citation>
    <scope>NUCLEOTIDE SEQUENCE [MRNA]</scope>
    <source>
        <tissue>Brain</tissue>
    </source>
</reference>
<reference key="4">
    <citation type="journal article" date="1998" name="J. Smooth Muscle Res.">
        <title>Molecular cloning of m3 muscarinic acetylcholine receptor in rat iris.</title>
        <authorList>
            <person name="Furuta M."/>
            <person name="Ohya S."/>
            <person name="Imaizumi Y."/>
            <person name="Watanabe M."/>
        </authorList>
    </citation>
    <scope>NUCLEOTIDE SEQUENCE [MRNA]</scope>
    <source>
        <tissue>Iris</tissue>
    </source>
</reference>
<reference key="5">
    <citation type="journal article" date="1990" name="J. Biol. Chem.">
        <title>Muscarinic acetylcholine receptors. Peptide sequencing identifies residues involved in antagonist binding and disulfide bond formation.</title>
        <authorList>
            <person name="Kurtenbach E."/>
            <person name="Curtis C.A.M."/>
            <person name="Pedder E.K."/>
            <person name="Aitken A."/>
            <person name="Harris A.C.M."/>
            <person name="Hulme E.C."/>
        </authorList>
    </citation>
    <scope>PROTEIN SEQUENCE OF 104-166</scope>
</reference>
<reference key="6">
    <citation type="journal article" date="1991" name="EMBO J.">
        <title>Site-directed mutagenesis of the m3 muscarinic receptor: identification of a series of threonine and tyrosine residues involved in agonist but not antagonist binding.</title>
        <authorList>
            <person name="Wess J."/>
            <person name="Gdula D."/>
            <person name="Brann M.R."/>
        </authorList>
    </citation>
    <scope>MUTAGENESIS OF TYR-148; THR-231; THR-234; TYR-506; TYR-529 AND TYR-533</scope>
    <scope>FUNCTION</scope>
    <scope>SUBCELLULAR LOCATION</scope>
</reference>
<reference key="7">
    <citation type="journal article" date="1992" name="J. Biol. Chem.">
        <title>Role of conserved threonine and tyrosine residues in acetylcholine binding and muscarinic receptor activation. A study with m3 muscarinic receptor point mutants.</title>
        <authorList>
            <person name="Wess J."/>
            <person name="Maggio R."/>
            <person name="Palmer J.R."/>
            <person name="Vogel Z."/>
        </authorList>
    </citation>
    <scope>MUTAGENESIS OF THR-234 AND TYR-506</scope>
    <scope>FUNCTION</scope>
    <scope>SUBCELLULAR LOCATION</scope>
</reference>
<reference key="8">
    <citation type="journal article" date="2012" name="Nature">
        <title>Structure and dynamics of the M3 muscarinic acetylcholine receptor.</title>
        <authorList>
            <person name="Kruse A.C."/>
            <person name="Hu J."/>
            <person name="Pan A.C."/>
            <person name="Arlow D.H."/>
            <person name="Rosenbaum D.M."/>
            <person name="Rosemond E."/>
            <person name="Green H.F."/>
            <person name="Liu T."/>
            <person name="Chae P.S."/>
            <person name="Dror R.O."/>
            <person name="Shaw D.E."/>
            <person name="Weis W.I."/>
            <person name="Wess J."/>
            <person name="Kobilka B.K."/>
        </authorList>
    </citation>
    <scope>X-RAY CRYSTALLOGRAPHY (3.40 ANGSTROMS) OF 57-589 IN COMPLEX WITH THE INVERSE AGONIST TIOTROPIUM</scope>
    <scope>FUNCTION</scope>
    <scope>SUBCELLULAR LOCATION</scope>
    <scope>TOPOLOGY</scope>
    <scope>DISULFIDE BOND</scope>
</reference>
<organism>
    <name type="scientific">Rattus norvegicus</name>
    <name type="common">Rat</name>
    <dbReference type="NCBI Taxonomy" id="10116"/>
    <lineage>
        <taxon>Eukaryota</taxon>
        <taxon>Metazoa</taxon>
        <taxon>Chordata</taxon>
        <taxon>Craniata</taxon>
        <taxon>Vertebrata</taxon>
        <taxon>Euteleostomi</taxon>
        <taxon>Mammalia</taxon>
        <taxon>Eutheria</taxon>
        <taxon>Euarchontoglires</taxon>
        <taxon>Glires</taxon>
        <taxon>Rodentia</taxon>
        <taxon>Myomorpha</taxon>
        <taxon>Muroidea</taxon>
        <taxon>Muridae</taxon>
        <taxon>Murinae</taxon>
        <taxon>Rattus</taxon>
    </lineage>
</organism>
<name>ACM3_RAT</name>
<gene>
    <name type="primary">Chrm3</name>
    <name type="synonym">Chrm-3</name>
</gene>
<sequence>MTLHSNSTTSPLFPNISSSWVHSPSEAGLPLGTVTQLGSYNISQETGNFSSNDTSSDPLGGHTIWQVVFIAFLTGFLALVTIIGNILVIVAFKVNKQLKTVNNYFLLSLACADLIIGVISMNLFTTYIIMNRWALGNLACDLWLSIDYVASNASVMNLLVISFDRYFSITRPLTYRAKRTTKRAGVMIGLAWVISFVLWAPAILFWQYFVGKRTVPPGECFIQFLSEPTITFGTAIAAFYMPVTIMTILYWRIYKETEKRTKELAGLQASGTEAEAENFVHPTGSSRSCSSYELQQQGVKRSSRRKYGRCHFWFTTKSWKPSAEQMDQDHSSSDSWNNNDAAASLENSASSDEEDIGSETRAIYSIVLKLPGHSSILNSTKLPSSDNLQVSNEDLGTVDVERNAHKLQAQKSMGDGDNCQKDFTKLPIQLESAVDTGKTSDTNSSADKTTATLPLSFKEATLAKRFALKTRSQITKRKRMSLIKEKKAAQTLSAILLAFIITWTPYNIMVLVNTFCDSCIPKTYWNLGYWLCYINSTVNPVCYALCNKTFRTTFKTLLLCQCDKRKRRKQQYQQRQSVIFHKRVPEQAL</sequence>
<accession>P08483</accession>
<accession>Q9QWK9</accession>
<proteinExistence type="evidence at protein level"/>
<evidence type="ECO:0000250" key="1"/>
<evidence type="ECO:0000250" key="2">
    <source>
        <dbReference type="UniProtKB" id="P20309"/>
    </source>
</evidence>
<evidence type="ECO:0000250" key="3">
    <source>
        <dbReference type="UniProtKB" id="Q9ERZ3"/>
    </source>
</evidence>
<evidence type="ECO:0000255" key="4"/>
<evidence type="ECO:0000255" key="5">
    <source>
        <dbReference type="PROSITE-ProRule" id="PRU00521"/>
    </source>
</evidence>
<evidence type="ECO:0000256" key="6">
    <source>
        <dbReference type="SAM" id="MobiDB-lite"/>
    </source>
</evidence>
<evidence type="ECO:0000269" key="7">
    <source>
    </source>
</evidence>
<evidence type="ECO:0000269" key="8">
    <source>
    </source>
</evidence>
<evidence type="ECO:0000269" key="9">
    <source>
    </source>
</evidence>
<evidence type="ECO:0000305" key="10"/>
<evidence type="ECO:0007829" key="11">
    <source>
        <dbReference type="PDB" id="4DAJ"/>
    </source>
</evidence>
<evidence type="ECO:0007829" key="12">
    <source>
        <dbReference type="PDB" id="4U15"/>
    </source>
</evidence>
<evidence type="ECO:0007829" key="13">
    <source>
        <dbReference type="PDB" id="5ZHP"/>
    </source>
</evidence>
<keyword id="KW-0002">3D-structure</keyword>
<keyword id="KW-1003">Cell membrane</keyword>
<keyword id="KW-0903">Direct protein sequencing</keyword>
<keyword id="KW-1015">Disulfide bond</keyword>
<keyword id="KW-0256">Endoplasmic reticulum</keyword>
<keyword id="KW-0297">G-protein coupled receptor</keyword>
<keyword id="KW-0325">Glycoprotein</keyword>
<keyword id="KW-0472">Membrane</keyword>
<keyword id="KW-0597">Phosphoprotein</keyword>
<keyword id="KW-0628">Postsynaptic cell membrane</keyword>
<keyword id="KW-0675">Receptor</keyword>
<keyword id="KW-1185">Reference proteome</keyword>
<keyword id="KW-0770">Synapse</keyword>
<keyword id="KW-0807">Transducer</keyword>
<keyword id="KW-0812">Transmembrane</keyword>
<keyword id="KW-1133">Transmembrane helix</keyword>
<feature type="chain" id="PRO_0000069034" description="Muscarinic acetylcholine receptor M3">
    <location>
        <begin position="1"/>
        <end position="589"/>
    </location>
</feature>
<feature type="topological domain" description="Extracellular" evidence="9">
    <location>
        <begin position="1"/>
        <end position="66"/>
    </location>
</feature>
<feature type="transmembrane region" description="Helical; Name=1">
    <location>
        <begin position="67"/>
        <end position="90"/>
    </location>
</feature>
<feature type="topological domain" description="Cytoplasmic" evidence="9">
    <location>
        <begin position="91"/>
        <end position="103"/>
    </location>
</feature>
<feature type="transmembrane region" description="Helical; Name=2">
    <location>
        <begin position="104"/>
        <end position="129"/>
    </location>
</feature>
<feature type="topological domain" description="Extracellular" evidence="9">
    <location>
        <begin position="130"/>
        <end position="141"/>
    </location>
</feature>
<feature type="transmembrane region" description="Helical; Name=3">
    <location>
        <begin position="142"/>
        <end position="163"/>
    </location>
</feature>
<feature type="topological domain" description="Cytoplasmic" evidence="9">
    <location>
        <begin position="164"/>
        <end position="183"/>
    </location>
</feature>
<feature type="transmembrane region" description="Helical; Name=4">
    <location>
        <begin position="184"/>
        <end position="205"/>
    </location>
</feature>
<feature type="topological domain" description="Extracellular" evidence="9">
    <location>
        <begin position="206"/>
        <end position="228"/>
    </location>
</feature>
<feature type="transmembrane region" description="Helical; Name=5">
    <location>
        <begin position="229"/>
        <end position="251"/>
    </location>
</feature>
<feature type="topological domain" description="Cytoplasmic" evidence="9">
    <location>
        <begin position="252"/>
        <end position="490"/>
    </location>
</feature>
<feature type="transmembrane region" description="Helical; Name=6">
    <location>
        <begin position="491"/>
        <end position="513"/>
    </location>
</feature>
<feature type="topological domain" description="Extracellular" evidence="9">
    <location>
        <begin position="514"/>
        <end position="525"/>
    </location>
</feature>
<feature type="transmembrane region" description="Helical; Name=7">
    <location>
        <begin position="526"/>
        <end position="545"/>
    </location>
</feature>
<feature type="topological domain" description="Cytoplasmic" evidence="9">
    <location>
        <begin position="546"/>
        <end position="589"/>
    </location>
</feature>
<feature type="region of interest" description="Disordered" evidence="6">
    <location>
        <begin position="323"/>
        <end position="356"/>
    </location>
</feature>
<feature type="short sequence motif" description="Basolateral sorting signal" evidence="1">
    <location>
        <begin position="274"/>
        <end position="280"/>
    </location>
</feature>
<feature type="compositionally biased region" description="Low complexity" evidence="6">
    <location>
        <begin position="333"/>
        <end position="344"/>
    </location>
</feature>
<feature type="modified residue" description="Phosphoserine" evidence="3">
    <location>
        <position position="384"/>
    </location>
</feature>
<feature type="glycosylation site" description="N-linked (GlcNAc...) asparagine" evidence="4">
    <location>
        <position position="6"/>
    </location>
</feature>
<feature type="glycosylation site" description="N-linked (GlcNAc...) asparagine" evidence="4">
    <location>
        <position position="15"/>
    </location>
</feature>
<feature type="glycosylation site" description="N-linked (GlcNAc...) asparagine" evidence="4">
    <location>
        <position position="41"/>
    </location>
</feature>
<feature type="glycosylation site" description="N-linked (GlcNAc...) asparagine" evidence="4">
    <location>
        <position position="48"/>
    </location>
</feature>
<feature type="glycosylation site" description="N-linked (GlcNAc...) asparagine" evidence="4">
    <location>
        <position position="52"/>
    </location>
</feature>
<feature type="disulfide bond" evidence="5 9">
    <location>
        <begin position="140"/>
        <end position="220"/>
    </location>
</feature>
<feature type="disulfide bond" evidence="5 9">
    <location>
        <begin position="516"/>
        <end position="519"/>
    </location>
</feature>
<feature type="mutagenesis site" description="Decreased affinity for acetylcholine." evidence="8">
    <original>Y</original>
    <variation>A</variation>
    <location>
        <position position="148"/>
    </location>
</feature>
<feature type="mutagenesis site" description="Decreased affinity for acetylcholine." evidence="8">
    <original>T</original>
    <variation>A</variation>
    <location>
        <position position="231"/>
    </location>
</feature>
<feature type="mutagenesis site" description="Strongly decreased affinity for acetylcholine." evidence="7 8">
    <original>T</original>
    <variation>A</variation>
    <location>
        <position position="234"/>
    </location>
</feature>
<feature type="mutagenesis site" description="Decreased affinity for acetylcholine." evidence="7 8">
    <original>Y</original>
    <variation>F</variation>
    <location>
        <position position="506"/>
    </location>
</feature>
<feature type="mutagenesis site" description="Decreased affinity for acetylcholine." evidence="8">
    <original>Y</original>
    <variation>F</variation>
    <location>
        <position position="529"/>
    </location>
</feature>
<feature type="mutagenesis site" description="Decreased affinity for acetylcholine." evidence="8">
    <original>Y</original>
    <variation>F</variation>
    <location>
        <position position="533"/>
    </location>
</feature>
<feature type="sequence conflict" description="In Ref. 1; AAA40661/AAA40662 and 4; BAA36839." evidence="10" ref="1 4">
    <original>A</original>
    <variation>R</variation>
    <location>
        <position position="184"/>
    </location>
</feature>
<feature type="sequence conflict" description="In Ref. 3; AAA40659." evidence="10" ref="3">
    <original>C</original>
    <variation>R</variation>
    <location>
        <position position="516"/>
    </location>
</feature>
<feature type="sequence conflict" description="In Ref. 3; AAA40659." evidence="10" ref="3">
    <original>T</original>
    <variation>M</variation>
    <location>
        <position position="556"/>
    </location>
</feature>
<feature type="helix" evidence="12">
    <location>
        <begin position="65"/>
        <end position="94"/>
    </location>
</feature>
<feature type="strand" evidence="13">
    <location>
        <begin position="96"/>
        <end position="98"/>
    </location>
</feature>
<feature type="helix" evidence="12">
    <location>
        <begin position="102"/>
        <end position="118"/>
    </location>
</feature>
<feature type="helix" evidence="12">
    <location>
        <begin position="120"/>
        <end position="129"/>
    </location>
</feature>
<feature type="strand" evidence="12">
    <location>
        <begin position="130"/>
        <end position="132"/>
    </location>
</feature>
<feature type="helix" evidence="12">
    <location>
        <begin position="137"/>
        <end position="170"/>
    </location>
</feature>
<feature type="strand" evidence="12">
    <location>
        <begin position="173"/>
        <end position="175"/>
    </location>
</feature>
<feature type="turn" evidence="12">
    <location>
        <begin position="176"/>
        <end position="178"/>
    </location>
</feature>
<feature type="helix" evidence="12">
    <location>
        <begin position="181"/>
        <end position="210"/>
    </location>
</feature>
<feature type="helix" evidence="13">
    <location>
        <begin position="224"/>
        <end position="226"/>
    </location>
</feature>
<feature type="helix" evidence="12">
    <location>
        <begin position="228"/>
        <end position="238"/>
    </location>
</feature>
<feature type="helix" evidence="12">
    <location>
        <begin position="240"/>
        <end position="253"/>
    </location>
</feature>
<feature type="helix" evidence="12">
    <location>
        <begin position="255"/>
        <end position="257"/>
    </location>
</feature>
<feature type="helix" evidence="13">
    <location>
        <begin position="291"/>
        <end position="295"/>
    </location>
</feature>
<feature type="helix" evidence="13">
    <location>
        <begin position="304"/>
        <end position="307"/>
    </location>
</feature>
<feature type="helix" evidence="12">
    <location>
        <begin position="483"/>
        <end position="502"/>
    </location>
</feature>
<feature type="helix" evidence="12">
    <location>
        <begin position="504"/>
        <end position="513"/>
    </location>
</feature>
<feature type="strand" evidence="11">
    <location>
        <begin position="517"/>
        <end position="519"/>
    </location>
</feature>
<feature type="helix" evidence="12">
    <location>
        <begin position="522"/>
        <end position="533"/>
    </location>
</feature>
<feature type="helix" evidence="12">
    <location>
        <begin position="535"/>
        <end position="544"/>
    </location>
</feature>
<feature type="helix" evidence="12">
    <location>
        <begin position="548"/>
        <end position="556"/>
    </location>
</feature>
<comment type="function">
    <text evidence="7 8 9">The muscarinic acetylcholine receptor mediates various cellular responses, including inhibition of adenylate cyclase, breakdown of phosphoinositides and modulation of potassium channels through the action of G proteins. Primary transducing effect is Pi turnover.</text>
</comment>
<comment type="subunit">
    <text evidence="2 3">Homodimer; the dimers can form tetramers (By similarity). Interacts with NALCN (By similarity). Interacts with TMEM147 (By similarity).</text>
</comment>
<comment type="interaction">
    <interactant intactId="EBI-7946407">
        <id>P08483</id>
    </interactant>
    <interactant intactId="EBI-2640645">
        <id>P11275</id>
        <label>Camk2a</label>
    </interactant>
    <organismsDiffer>false</organismsDiffer>
    <experiments>2</experiments>
</comment>
<comment type="subcellular location">
    <subcellularLocation>
        <location evidence="7">Cell membrane</location>
        <topology evidence="4">Multi-pass membrane protein</topology>
    </subcellularLocation>
    <subcellularLocation>
        <location>Postsynaptic cell membrane</location>
        <topology evidence="4">Multi-pass membrane protein</topology>
    </subcellularLocation>
    <subcellularLocation>
        <location evidence="2">Basolateral cell membrane</location>
        <topology evidence="4">Multi-pass membrane protein</topology>
    </subcellularLocation>
    <subcellularLocation>
        <location evidence="2">Endoplasmic reticulum membrane</location>
        <topology evidence="4">Multi-pass membrane protein</topology>
    </subcellularLocation>
    <text evidence="2">Colocalizes with TMEM147 in the endoplasmic reticulum (ER) membrane. TMEM147 impairs its trafficking to the cell membrane leading to its retention in the ER membrane.</text>
</comment>
<comment type="similarity">
    <text evidence="5">Belongs to the G-protein coupled receptor 1 family. Muscarinic acetylcholine receptor subfamily. CHRM3 sub-subfamily.</text>
</comment>
<dbReference type="EMBL" id="M16407">
    <property type="protein sequence ID" value="AAA40661.1"/>
    <property type="molecule type" value="mRNA"/>
</dbReference>
<dbReference type="EMBL" id="M16408">
    <property type="protein sequence ID" value="AAA40662.1"/>
    <property type="molecule type" value="Genomic_DNA"/>
</dbReference>
<dbReference type="EMBL" id="M18088">
    <property type="protein sequence ID" value="AAA40659.1"/>
    <property type="molecule type" value="mRNA"/>
</dbReference>
<dbReference type="EMBL" id="M62826">
    <property type="protein sequence ID" value="AAA41553.1"/>
    <property type="molecule type" value="Genomic_DNA"/>
</dbReference>
<dbReference type="EMBL" id="AB017656">
    <property type="protein sequence ID" value="BAA36839.1"/>
    <property type="molecule type" value="mRNA"/>
</dbReference>
<dbReference type="PIR" id="A29476">
    <property type="entry name" value="A29476"/>
</dbReference>
<dbReference type="PIR" id="B94518">
    <property type="entry name" value="B29514"/>
</dbReference>
<dbReference type="RefSeq" id="NP_036659.2">
    <property type="nucleotide sequence ID" value="NM_012527.2"/>
</dbReference>
<dbReference type="RefSeq" id="XP_017455938.1">
    <property type="nucleotide sequence ID" value="XM_017600449.3"/>
</dbReference>
<dbReference type="RefSeq" id="XP_017455939.1">
    <property type="nucleotide sequence ID" value="XM_017600450.1"/>
</dbReference>
<dbReference type="RefSeq" id="XP_017455940.1">
    <property type="nucleotide sequence ID" value="XM_017600451.1"/>
</dbReference>
<dbReference type="RefSeq" id="XP_017455941.1">
    <property type="nucleotide sequence ID" value="XM_017600452.1"/>
</dbReference>
<dbReference type="RefSeq" id="XP_038951264.1">
    <property type="nucleotide sequence ID" value="XM_039095336.2"/>
</dbReference>
<dbReference type="RefSeq" id="XP_038951265.1">
    <property type="nucleotide sequence ID" value="XM_039095337.2"/>
</dbReference>
<dbReference type="RefSeq" id="XP_038951266.1">
    <property type="nucleotide sequence ID" value="XM_039095338.2"/>
</dbReference>
<dbReference type="RefSeq" id="XP_063132113.1">
    <property type="nucleotide sequence ID" value="XM_063276043.1"/>
</dbReference>
<dbReference type="RefSeq" id="XP_063132114.1">
    <property type="nucleotide sequence ID" value="XM_063276044.1"/>
</dbReference>
<dbReference type="RefSeq" id="XP_063132115.1">
    <property type="nucleotide sequence ID" value="XM_063276045.1"/>
</dbReference>
<dbReference type="RefSeq" id="XP_063132116.1">
    <property type="nucleotide sequence ID" value="XM_063276046.1"/>
</dbReference>
<dbReference type="RefSeq" id="XP_063132117.1">
    <property type="nucleotide sequence ID" value="XM_063276047.1"/>
</dbReference>
<dbReference type="RefSeq" id="XP_063132118.1">
    <property type="nucleotide sequence ID" value="XM_063276048.1"/>
</dbReference>
<dbReference type="PDB" id="4DAJ">
    <property type="method" value="X-ray"/>
    <property type="resolution" value="3.40 A"/>
    <property type="chains" value="A/B/C/D=57-259, A/B/C/D=482-589"/>
</dbReference>
<dbReference type="PDB" id="4U14">
    <property type="method" value="X-ray"/>
    <property type="resolution" value="3.57 A"/>
    <property type="chains" value="A=57-259, A=482-563"/>
</dbReference>
<dbReference type="PDB" id="4U15">
    <property type="method" value="X-ray"/>
    <property type="resolution" value="2.80 A"/>
    <property type="chains" value="A/B=57-259, A/B=482-563"/>
</dbReference>
<dbReference type="PDB" id="4U16">
    <property type="method" value="X-ray"/>
    <property type="resolution" value="3.70 A"/>
    <property type="chains" value="A/B=57-259, A/B=482-563"/>
</dbReference>
<dbReference type="PDB" id="5ZHP">
    <property type="method" value="X-ray"/>
    <property type="resolution" value="3.10 A"/>
    <property type="chains" value="A/B=57-308, A/B=482-569"/>
</dbReference>
<dbReference type="PDBsum" id="4DAJ"/>
<dbReference type="PDBsum" id="4U14"/>
<dbReference type="PDBsum" id="4U15"/>
<dbReference type="PDBsum" id="4U16"/>
<dbReference type="PDBsum" id="5ZHP"/>
<dbReference type="SMR" id="P08483"/>
<dbReference type="CORUM" id="P08483"/>
<dbReference type="FunCoup" id="P08483">
    <property type="interactions" value="1226"/>
</dbReference>
<dbReference type="IntAct" id="P08483">
    <property type="interactions" value="1"/>
</dbReference>
<dbReference type="MINT" id="P08483"/>
<dbReference type="STRING" id="10116.ENSRNOP00000067435"/>
<dbReference type="BindingDB" id="P08483"/>
<dbReference type="ChEMBL" id="CHEMBL320"/>
<dbReference type="DrugCentral" id="P08483"/>
<dbReference type="GuidetoPHARMACOLOGY" id="15"/>
<dbReference type="GlyCosmos" id="P08483">
    <property type="glycosylation" value="5 sites, No reported glycans"/>
</dbReference>
<dbReference type="GlyGen" id="P08483">
    <property type="glycosylation" value="5 sites"/>
</dbReference>
<dbReference type="iPTMnet" id="P08483"/>
<dbReference type="PhosphoSitePlus" id="P08483"/>
<dbReference type="PaxDb" id="10116-ENSRNOP00000067435"/>
<dbReference type="Ensembl" id="ENSRNOT00000075651.3">
    <property type="protein sequence ID" value="ENSRNOP00000067435.1"/>
    <property type="gene ID" value="ENSRNOG00000049410.3"/>
</dbReference>
<dbReference type="Ensembl" id="ENSRNOT00000102670.1">
    <property type="protein sequence ID" value="ENSRNOP00000090085.1"/>
    <property type="gene ID" value="ENSRNOG00000049410.3"/>
</dbReference>
<dbReference type="Ensembl" id="ENSRNOT00000103154.1">
    <property type="protein sequence ID" value="ENSRNOP00000090433.1"/>
    <property type="gene ID" value="ENSRNOG00000049410.3"/>
</dbReference>
<dbReference type="Ensembl" id="ENSRNOT00000107962.1">
    <property type="protein sequence ID" value="ENSRNOP00000086603.1"/>
    <property type="gene ID" value="ENSRNOG00000049410.3"/>
</dbReference>
<dbReference type="Ensembl" id="ENSRNOT00000113544.1">
    <property type="protein sequence ID" value="ENSRNOP00000087869.1"/>
    <property type="gene ID" value="ENSRNOG00000049410.3"/>
</dbReference>
<dbReference type="Ensembl" id="ENSRNOT00000118676.1">
    <property type="protein sequence ID" value="ENSRNOP00000080306.1"/>
    <property type="gene ID" value="ENSRNOG00000049410.3"/>
</dbReference>
<dbReference type="GeneID" id="24260"/>
<dbReference type="KEGG" id="rno:24260"/>
<dbReference type="UCSC" id="RGD:2343">
    <property type="organism name" value="rat"/>
</dbReference>
<dbReference type="AGR" id="RGD:2343"/>
<dbReference type="CTD" id="1131"/>
<dbReference type="RGD" id="2343">
    <property type="gene designation" value="Chrm3"/>
</dbReference>
<dbReference type="eggNOG" id="KOG4220">
    <property type="taxonomic scope" value="Eukaryota"/>
</dbReference>
<dbReference type="GeneTree" id="ENSGT00940000160084"/>
<dbReference type="HOGENOM" id="CLU_009579_11_2_1"/>
<dbReference type="InParanoid" id="P08483"/>
<dbReference type="OMA" id="TWACDLW"/>
<dbReference type="OrthoDB" id="10071887at2759"/>
<dbReference type="PhylomeDB" id="P08483"/>
<dbReference type="TreeFam" id="TF320495"/>
<dbReference type="Reactome" id="R-RNO-390648">
    <property type="pathway name" value="Muscarinic acetylcholine receptors"/>
</dbReference>
<dbReference type="Reactome" id="R-RNO-416476">
    <property type="pathway name" value="G alpha (q) signalling events"/>
</dbReference>
<dbReference type="EvolutionaryTrace" id="P08483"/>
<dbReference type="PRO" id="PR:P08483"/>
<dbReference type="Proteomes" id="UP000002494">
    <property type="component" value="Chromosome 17"/>
</dbReference>
<dbReference type="Bgee" id="ENSRNOG00000049410">
    <property type="expression patterns" value="Expressed in frontal cortex and 12 other cell types or tissues"/>
</dbReference>
<dbReference type="GO" id="GO:0032279">
    <property type="term" value="C:asymmetric synapse"/>
    <property type="evidence" value="ECO:0000314"/>
    <property type="project" value="RGD"/>
</dbReference>
<dbReference type="GO" id="GO:0043679">
    <property type="term" value="C:axon terminus"/>
    <property type="evidence" value="ECO:0000314"/>
    <property type="project" value="RGD"/>
</dbReference>
<dbReference type="GO" id="GO:0009925">
    <property type="term" value="C:basal plasma membrane"/>
    <property type="evidence" value="ECO:0000266"/>
    <property type="project" value="RGD"/>
</dbReference>
<dbReference type="GO" id="GO:0016323">
    <property type="term" value="C:basolateral plasma membrane"/>
    <property type="evidence" value="ECO:0007669"/>
    <property type="project" value="UniProtKB-SubCell"/>
</dbReference>
<dbReference type="GO" id="GO:0030425">
    <property type="term" value="C:dendrite"/>
    <property type="evidence" value="ECO:0000314"/>
    <property type="project" value="RGD"/>
</dbReference>
<dbReference type="GO" id="GO:0005789">
    <property type="term" value="C:endoplasmic reticulum membrane"/>
    <property type="evidence" value="ECO:0007669"/>
    <property type="project" value="UniProtKB-SubCell"/>
</dbReference>
<dbReference type="GO" id="GO:0098978">
    <property type="term" value="C:glutamatergic synapse"/>
    <property type="evidence" value="ECO:0000314"/>
    <property type="project" value="SynGO"/>
</dbReference>
<dbReference type="GO" id="GO:0005886">
    <property type="term" value="C:plasma membrane"/>
    <property type="evidence" value="ECO:0000314"/>
    <property type="project" value="UniProtKB"/>
</dbReference>
<dbReference type="GO" id="GO:0098839">
    <property type="term" value="C:postsynaptic density membrane"/>
    <property type="evidence" value="ECO:0000314"/>
    <property type="project" value="SynGO"/>
</dbReference>
<dbReference type="GO" id="GO:0042734">
    <property type="term" value="C:presynaptic membrane"/>
    <property type="evidence" value="ECO:0000314"/>
    <property type="project" value="SynGO"/>
</dbReference>
<dbReference type="GO" id="GO:0045202">
    <property type="term" value="C:synapse"/>
    <property type="evidence" value="ECO:0000318"/>
    <property type="project" value="GO_Central"/>
</dbReference>
<dbReference type="GO" id="GO:0042166">
    <property type="term" value="F:acetylcholine binding"/>
    <property type="evidence" value="ECO:0000314"/>
    <property type="project" value="UniProtKB"/>
</dbReference>
<dbReference type="GO" id="GO:0016907">
    <property type="term" value="F:G protein-coupled acetylcholine receptor activity"/>
    <property type="evidence" value="ECO:0000314"/>
    <property type="project" value="UniProtKB"/>
</dbReference>
<dbReference type="GO" id="GO:0031789">
    <property type="term" value="F:G protein-coupled acetylcholine receptor binding"/>
    <property type="evidence" value="ECO:0000314"/>
    <property type="project" value="RGD"/>
</dbReference>
<dbReference type="GO" id="GO:0050997">
    <property type="term" value="F:quaternary ammonium group binding"/>
    <property type="evidence" value="ECO:0000314"/>
    <property type="project" value="RGD"/>
</dbReference>
<dbReference type="GO" id="GO:0095500">
    <property type="term" value="P:acetylcholine receptor signaling pathway"/>
    <property type="evidence" value="ECO:0000266"/>
    <property type="project" value="RGD"/>
</dbReference>
<dbReference type="GO" id="GO:0007197">
    <property type="term" value="P:adenylate cyclase-inhibiting G protein-coupled acetylcholine receptor signaling pathway"/>
    <property type="evidence" value="ECO:0000318"/>
    <property type="project" value="GO_Central"/>
</dbReference>
<dbReference type="GO" id="GO:0019722">
    <property type="term" value="P:calcium-mediated signaling"/>
    <property type="evidence" value="ECO:0000266"/>
    <property type="project" value="RGD"/>
</dbReference>
<dbReference type="GO" id="GO:0007268">
    <property type="term" value="P:chemical synaptic transmission"/>
    <property type="evidence" value="ECO:0000318"/>
    <property type="project" value="GO_Central"/>
</dbReference>
<dbReference type="GO" id="GO:0007213">
    <property type="term" value="P:G protein-coupled acetylcholine receptor signaling pathway"/>
    <property type="evidence" value="ECO:0000314"/>
    <property type="project" value="UniProtKB"/>
</dbReference>
<dbReference type="GO" id="GO:0007187">
    <property type="term" value="P:G protein-coupled receptor signaling pathway, coupled to cyclic nucleotide second messenger"/>
    <property type="evidence" value="ECO:0000318"/>
    <property type="project" value="GO_Central"/>
</dbReference>
<dbReference type="GO" id="GO:1990806">
    <property type="term" value="P:ligand-gated ion channel signaling pathway"/>
    <property type="evidence" value="ECO:0000266"/>
    <property type="project" value="RGD"/>
</dbReference>
<dbReference type="GO" id="GO:0003063">
    <property type="term" value="P:negative regulation of heart rate by acetylcholine"/>
    <property type="evidence" value="ECO:0000315"/>
    <property type="project" value="RGD"/>
</dbReference>
<dbReference type="GO" id="GO:0007207">
    <property type="term" value="P:phospholipase C-activating G protein-coupled acetylcholine receptor signaling pathway"/>
    <property type="evidence" value="ECO:0000266"/>
    <property type="project" value="RGD"/>
</dbReference>
<dbReference type="GO" id="GO:0032024">
    <property type="term" value="P:positive regulation of insulin secretion"/>
    <property type="evidence" value="ECO:0000266"/>
    <property type="project" value="RGD"/>
</dbReference>
<dbReference type="GO" id="GO:0045987">
    <property type="term" value="P:positive regulation of smooth muscle contraction"/>
    <property type="evidence" value="ECO:0000266"/>
    <property type="project" value="RGD"/>
</dbReference>
<dbReference type="GO" id="GO:1904695">
    <property type="term" value="P:positive regulation of vascular associated smooth muscle contraction"/>
    <property type="evidence" value="ECO:0000315"/>
    <property type="project" value="RGD"/>
</dbReference>
<dbReference type="GO" id="GO:0045907">
    <property type="term" value="P:positive regulation of vasoconstriction"/>
    <property type="evidence" value="ECO:0000315"/>
    <property type="project" value="RGD"/>
</dbReference>
<dbReference type="GO" id="GO:0006940">
    <property type="term" value="P:regulation of smooth muscle contraction"/>
    <property type="evidence" value="ECO:0000318"/>
    <property type="project" value="GO_Central"/>
</dbReference>
<dbReference type="GO" id="GO:1905144">
    <property type="term" value="P:response to acetylcholine"/>
    <property type="evidence" value="ECO:0000315"/>
    <property type="project" value="RGD"/>
</dbReference>
<dbReference type="GO" id="GO:0046541">
    <property type="term" value="P:saliva secretion"/>
    <property type="evidence" value="ECO:0000266"/>
    <property type="project" value="RGD"/>
</dbReference>
<dbReference type="GO" id="GO:0006939">
    <property type="term" value="P:smooth muscle contraction"/>
    <property type="evidence" value="ECO:0000266"/>
    <property type="project" value="RGD"/>
</dbReference>
<dbReference type="GO" id="GO:0007271">
    <property type="term" value="P:synaptic transmission, cholinergic"/>
    <property type="evidence" value="ECO:0000266"/>
    <property type="project" value="RGD"/>
</dbReference>
<dbReference type="CDD" id="cd15299">
    <property type="entry name" value="7tmA_mAChR_M3"/>
    <property type="match status" value="1"/>
</dbReference>
<dbReference type="FunFam" id="1.20.1070.10:FF:000047">
    <property type="entry name" value="Muscarinic acetylcholine receptor"/>
    <property type="match status" value="1"/>
</dbReference>
<dbReference type="FunFam" id="1.20.1070.10:FF:000103">
    <property type="entry name" value="Muscarinic acetylcholine receptor"/>
    <property type="match status" value="1"/>
</dbReference>
<dbReference type="Gene3D" id="1.20.1070.10">
    <property type="entry name" value="Rhodopsin 7-helix transmembrane proteins"/>
    <property type="match status" value="2"/>
</dbReference>
<dbReference type="InterPro" id="IPR000276">
    <property type="entry name" value="GPCR_Rhodpsn"/>
</dbReference>
<dbReference type="InterPro" id="IPR017452">
    <property type="entry name" value="GPCR_Rhodpsn_7TM"/>
</dbReference>
<dbReference type="InterPro" id="IPR001183">
    <property type="entry name" value="Musac_Ach_M3_rcpt"/>
</dbReference>
<dbReference type="InterPro" id="IPR000995">
    <property type="entry name" value="Musac_Ach_rcpt"/>
</dbReference>
<dbReference type="PANTHER" id="PTHR24247">
    <property type="entry name" value="5-HYDROXYTRYPTAMINE RECEPTOR"/>
    <property type="match status" value="1"/>
</dbReference>
<dbReference type="PANTHER" id="PTHR24247:SF183">
    <property type="entry name" value="MUSCARINIC ACETYLCHOLINE RECEPTOR M3"/>
    <property type="match status" value="1"/>
</dbReference>
<dbReference type="Pfam" id="PF00001">
    <property type="entry name" value="7tm_1"/>
    <property type="match status" value="1"/>
</dbReference>
<dbReference type="PRINTS" id="PR00237">
    <property type="entry name" value="GPCRRHODOPSN"/>
</dbReference>
<dbReference type="PRINTS" id="PR00243">
    <property type="entry name" value="MUSCARINICR"/>
</dbReference>
<dbReference type="PRINTS" id="PR00540">
    <property type="entry name" value="MUSCRINICM3R"/>
</dbReference>
<dbReference type="SMART" id="SM01381">
    <property type="entry name" value="7TM_GPCR_Srsx"/>
    <property type="match status" value="1"/>
</dbReference>
<dbReference type="SUPFAM" id="SSF81321">
    <property type="entry name" value="Family A G protein-coupled receptor-like"/>
    <property type="match status" value="1"/>
</dbReference>
<dbReference type="PROSITE" id="PS00237">
    <property type="entry name" value="G_PROTEIN_RECEP_F1_1"/>
    <property type="match status" value="1"/>
</dbReference>
<dbReference type="PROSITE" id="PS50262">
    <property type="entry name" value="G_PROTEIN_RECEP_F1_2"/>
    <property type="match status" value="1"/>
</dbReference>